<protein>
    <recommendedName>
        <fullName evidence="11">Vacuolar-sorting protein BRO1</fullName>
    </recommendedName>
    <alternativeName>
        <fullName evidence="11">BRO domain-containing protein 1</fullName>
        <shortName evidence="10">AtBRO1</shortName>
    </alternativeName>
</protein>
<feature type="chain" id="PRO_0000440687" description="Vacuolar-sorting protein BRO1">
    <location>
        <begin position="1"/>
        <end position="846"/>
    </location>
</feature>
<feature type="domain" description="BRO1" evidence="2">
    <location>
        <begin position="5"/>
        <end position="403"/>
    </location>
</feature>
<feature type="region of interest" description="Disordered" evidence="3">
    <location>
        <begin position="726"/>
        <end position="846"/>
    </location>
</feature>
<feature type="coiled-coil region" evidence="1">
    <location>
        <begin position="565"/>
        <end position="592"/>
    </location>
</feature>
<feature type="compositionally biased region" description="Low complexity" evidence="3">
    <location>
        <begin position="763"/>
        <end position="780"/>
    </location>
</feature>
<feature type="compositionally biased region" description="Low complexity" evidence="3">
    <location>
        <begin position="790"/>
        <end position="823"/>
    </location>
</feature>
<feature type="compositionally biased region" description="Pro residues" evidence="3">
    <location>
        <begin position="824"/>
        <end position="836"/>
    </location>
</feature>
<feature type="mutagenesis site" description="Reduces binding to VPS32." evidence="5">
    <original>G</original>
    <variation>D</variation>
    <location>
        <position position="260"/>
    </location>
</feature>
<feature type="sequence conflict" description="In Ref. 3; AAN12917/AAO64756." evidence="11" ref="3">
    <original>D</original>
    <variation>E</variation>
    <location>
        <position position="70"/>
    </location>
</feature>
<feature type="sequence conflict" description="In Ref. 3; AAN12917/AAO64756." evidence="11" ref="3">
    <original>N</original>
    <variation>D</variation>
    <location>
        <position position="316"/>
    </location>
</feature>
<feature type="sequence conflict" description="In Ref. 3; AAN12917/AAO64756." evidence="11" ref="3">
    <original>K</original>
    <variation>Q</variation>
    <location>
        <position position="697"/>
    </location>
</feature>
<reference key="1">
    <citation type="journal article" date="2000" name="Nature">
        <title>Sequence and analysis of chromosome 1 of the plant Arabidopsis thaliana.</title>
        <authorList>
            <person name="Theologis A."/>
            <person name="Ecker J.R."/>
            <person name="Palm C.J."/>
            <person name="Federspiel N.A."/>
            <person name="Kaul S."/>
            <person name="White O."/>
            <person name="Alonso J."/>
            <person name="Altafi H."/>
            <person name="Araujo R."/>
            <person name="Bowman C.L."/>
            <person name="Brooks S.Y."/>
            <person name="Buehler E."/>
            <person name="Chan A."/>
            <person name="Chao Q."/>
            <person name="Chen H."/>
            <person name="Cheuk R.F."/>
            <person name="Chin C.W."/>
            <person name="Chung M.K."/>
            <person name="Conn L."/>
            <person name="Conway A.B."/>
            <person name="Conway A.R."/>
            <person name="Creasy T.H."/>
            <person name="Dewar K."/>
            <person name="Dunn P."/>
            <person name="Etgu P."/>
            <person name="Feldblyum T.V."/>
            <person name="Feng J.-D."/>
            <person name="Fong B."/>
            <person name="Fujii C.Y."/>
            <person name="Gill J.E."/>
            <person name="Goldsmith A.D."/>
            <person name="Haas B."/>
            <person name="Hansen N.F."/>
            <person name="Hughes B."/>
            <person name="Huizar L."/>
            <person name="Hunter J.L."/>
            <person name="Jenkins J."/>
            <person name="Johnson-Hopson C."/>
            <person name="Khan S."/>
            <person name="Khaykin E."/>
            <person name="Kim C.J."/>
            <person name="Koo H.L."/>
            <person name="Kremenetskaia I."/>
            <person name="Kurtz D.B."/>
            <person name="Kwan A."/>
            <person name="Lam B."/>
            <person name="Langin-Hooper S."/>
            <person name="Lee A."/>
            <person name="Lee J.M."/>
            <person name="Lenz C.A."/>
            <person name="Li J.H."/>
            <person name="Li Y.-P."/>
            <person name="Lin X."/>
            <person name="Liu S.X."/>
            <person name="Liu Z.A."/>
            <person name="Luros J.S."/>
            <person name="Maiti R."/>
            <person name="Marziali A."/>
            <person name="Militscher J."/>
            <person name="Miranda M."/>
            <person name="Nguyen M."/>
            <person name="Nierman W.C."/>
            <person name="Osborne B.I."/>
            <person name="Pai G."/>
            <person name="Peterson J."/>
            <person name="Pham P.K."/>
            <person name="Rizzo M."/>
            <person name="Rooney T."/>
            <person name="Rowley D."/>
            <person name="Sakano H."/>
            <person name="Salzberg S.L."/>
            <person name="Schwartz J.R."/>
            <person name="Shinn P."/>
            <person name="Southwick A.M."/>
            <person name="Sun H."/>
            <person name="Tallon L.J."/>
            <person name="Tambunga G."/>
            <person name="Toriumi M.J."/>
            <person name="Town C.D."/>
            <person name="Utterback T."/>
            <person name="Van Aken S."/>
            <person name="Vaysberg M."/>
            <person name="Vysotskaia V.S."/>
            <person name="Walker M."/>
            <person name="Wu D."/>
            <person name="Yu G."/>
            <person name="Fraser C.M."/>
            <person name="Venter J.C."/>
            <person name="Davis R.W."/>
        </authorList>
    </citation>
    <scope>NUCLEOTIDE SEQUENCE [LARGE SCALE GENOMIC DNA]</scope>
    <source>
        <strain>cv. Columbia</strain>
    </source>
</reference>
<reference key="2">
    <citation type="journal article" date="2017" name="Plant J.">
        <title>Araport11: a complete reannotation of the Arabidopsis thaliana reference genome.</title>
        <authorList>
            <person name="Cheng C.Y."/>
            <person name="Krishnakumar V."/>
            <person name="Chan A.P."/>
            <person name="Thibaud-Nissen F."/>
            <person name="Schobel S."/>
            <person name="Town C.D."/>
        </authorList>
    </citation>
    <scope>GENOME REANNOTATION</scope>
    <source>
        <strain>cv. Columbia</strain>
    </source>
</reference>
<reference key="3">
    <citation type="journal article" date="2003" name="Science">
        <title>Empirical analysis of transcriptional activity in the Arabidopsis genome.</title>
        <authorList>
            <person name="Yamada K."/>
            <person name="Lim J."/>
            <person name="Dale J.M."/>
            <person name="Chen H."/>
            <person name="Shinn P."/>
            <person name="Palm C.J."/>
            <person name="Southwick A.M."/>
            <person name="Wu H.C."/>
            <person name="Kim C.J."/>
            <person name="Nguyen M."/>
            <person name="Pham P.K."/>
            <person name="Cheuk R.F."/>
            <person name="Karlin-Newmann G."/>
            <person name="Liu S.X."/>
            <person name="Lam B."/>
            <person name="Sakano H."/>
            <person name="Wu T."/>
            <person name="Yu G."/>
            <person name="Miranda M."/>
            <person name="Quach H.L."/>
            <person name="Tripp M."/>
            <person name="Chang C.H."/>
            <person name="Lee J.M."/>
            <person name="Toriumi M.J."/>
            <person name="Chan M.M."/>
            <person name="Tang C.C."/>
            <person name="Onodera C.S."/>
            <person name="Deng J.M."/>
            <person name="Akiyama K."/>
            <person name="Ansari Y."/>
            <person name="Arakawa T."/>
            <person name="Banh J."/>
            <person name="Banno F."/>
            <person name="Bowser L."/>
            <person name="Brooks S.Y."/>
            <person name="Carninci P."/>
            <person name="Chao Q."/>
            <person name="Choy N."/>
            <person name="Enju A."/>
            <person name="Goldsmith A.D."/>
            <person name="Gurjal M."/>
            <person name="Hansen N.F."/>
            <person name="Hayashizaki Y."/>
            <person name="Johnson-Hopson C."/>
            <person name="Hsuan V.W."/>
            <person name="Iida K."/>
            <person name="Karnes M."/>
            <person name="Khan S."/>
            <person name="Koesema E."/>
            <person name="Ishida J."/>
            <person name="Jiang P.X."/>
            <person name="Jones T."/>
            <person name="Kawai J."/>
            <person name="Kamiya A."/>
            <person name="Meyers C."/>
            <person name="Nakajima M."/>
            <person name="Narusaka M."/>
            <person name="Seki M."/>
            <person name="Sakurai T."/>
            <person name="Satou M."/>
            <person name="Tamse R."/>
            <person name="Vaysberg M."/>
            <person name="Wallender E.K."/>
            <person name="Wong C."/>
            <person name="Yamamura Y."/>
            <person name="Yuan S."/>
            <person name="Shinozaki K."/>
            <person name="Davis R.W."/>
            <person name="Theologis A."/>
            <person name="Ecker J.R."/>
        </authorList>
    </citation>
    <scope>NUCLEOTIDE SEQUENCE [LARGE SCALE MRNA]</scope>
    <source>
        <strain>cv. Columbia</strain>
    </source>
</reference>
<reference key="4">
    <citation type="journal article" date="2009" name="J. Proteomics">
        <title>Phosphoproteomic analysis of nuclei-enriched fractions from Arabidopsis thaliana.</title>
        <authorList>
            <person name="Jones A.M.E."/>
            <person name="MacLean D."/>
            <person name="Studholme D.J."/>
            <person name="Serna-Sanz A."/>
            <person name="Andreasson E."/>
            <person name="Rathjen J.P."/>
            <person name="Peck S.C."/>
        </authorList>
    </citation>
    <scope>IDENTIFICATION BY MASS SPECTROMETRY [LARGE SCALE ANALYSIS]</scope>
    <source>
        <strain>cv. Columbia</strain>
    </source>
</reference>
<reference key="5">
    <citation type="journal article" date="2011" name="Front. Plant Sci.">
        <title>Protein-protein interaction network and subcellular localization of the Arabidopsis thaliana ESCRT machinery.</title>
        <authorList>
            <person name="Richardson L.G."/>
            <person name="Howard A.S."/>
            <person name="Khuu N."/>
            <person name="Gidda S.K."/>
            <person name="McCartney A."/>
            <person name="Morphy B.J."/>
            <person name="Mullen R.T."/>
        </authorList>
    </citation>
    <scope>NOMENCLATURE</scope>
    <scope>INTERACTION WITH VPS32.1 AND VPS32.2</scope>
</reference>
<reference key="6">
    <citation type="journal article" date="2015" name="Plant Cell">
        <title>ESCRT-III-associated protein ALIX mediates high-affinity phosphate transporter trafficking to maintain phosphate homeostasis in Arabidopsis.</title>
        <authorList>
            <person name="Cardona-Lopez X."/>
            <person name="Cuyas L."/>
            <person name="Marin E."/>
            <person name="Rajulu C."/>
            <person name="Irigoyen M.L."/>
            <person name="Gil E."/>
            <person name="Puga M.I."/>
            <person name="Bligny R."/>
            <person name="Nussaume L."/>
            <person name="Geldner N."/>
            <person name="Paz-Ares J."/>
            <person name="Rubio V."/>
        </authorList>
    </citation>
    <scope>SUBUNIT</scope>
    <scope>DISRUPTION PHENOTYPE</scope>
    <scope>SUBCELLULAR LOCATION</scope>
    <scope>INTERACTION WITH VPS32.1 AND VPS32.2</scope>
    <scope>FUNCTION</scope>
</reference>
<reference key="7">
    <citation type="journal article" date="2015" name="Proc. Natl. Acad. Sci. U.S.A.">
        <title>Arabidopsis ALIX is required for the endosomal localization of the deubiquitinating enzyme AMSH3.</title>
        <authorList>
            <person name="Kalinowska K."/>
            <person name="Nagel M.K."/>
            <person name="Goodman K."/>
            <person name="Cuyas L."/>
            <person name="Anzenberger F."/>
            <person name="Alkofer A."/>
            <person name="Paz-Ares J."/>
            <person name="Braun P."/>
            <person name="Rubio V."/>
            <person name="Otegui M.S."/>
            <person name="Isono E."/>
        </authorList>
    </citation>
    <scope>INTERACTION WITH AMSH3</scope>
    <scope>SUBCELLULAR LOCATION</scope>
    <scope>DISRUPTION PHENOTYPE</scope>
    <scope>FUNCTION</scope>
    <scope>MUTAGENESIS OF GLY-260</scope>
</reference>
<reference key="8">
    <citation type="journal article" date="2016" name="Mol. Plant">
        <title>AtBRO1 functions in ESCRT-I complex to regulate multivesicular body protein sorting.</title>
        <authorList>
            <person name="Shen J."/>
            <person name="Gao C."/>
            <person name="Zhao Q."/>
            <person name="Lin Y."/>
            <person name="Wang X."/>
            <person name="Zhuang X."/>
            <person name="Jiang L."/>
        </authorList>
    </citation>
    <scope>SUBCELLULAR LOCATION</scope>
    <scope>INTERACTION WITH ELC</scope>
    <scope>DISRUPTION PHENOTYPE</scope>
    <scope>FUNCTION</scope>
</reference>
<comment type="function">
    <text evidence="5 6 7 12">Class E VPS protein involved in concentration and sorting of cargo proteins of the multivesicular body (MVB) for incorporation into intralumenal vesicles. Fusion between endosomes and the vacuole will then target the cargo proteins to the vacuolar lumen (Probable). Associates with FREE1 and ELC to perform function in the ESCRT-I complex. Binds ubiquitin in vitro (PubMed:26902184). Plays a role in the biogenesis of vacuole and multivesicular bodies (MVBs) (PubMed:26324913, PubMed:26342016). Required for the endosomal location of AMSH3 (PubMed:26324913). Mediates high-affinity phosphate transporter trafficking to maintain phosphate homeostasis. Regulates vacuolar degradation of PHT1-1 (PubMed:26342016).</text>
</comment>
<comment type="subunit">
    <text evidence="4 5 6 7">Homodimer (PubMed:26342016). Interacts with AMSH3 (PubMed:26324913). Interacts with VPS32.1/SNF7B and VPS32.2/SNF7A (PubMed:22639582, PubMed:26342016). Interacts with ELC/VPS23A (PubMed:26902184).</text>
</comment>
<comment type="subcellular location">
    <subcellularLocation>
        <location evidence="5 6">Cytoplasm</location>
    </subcellularLocation>
    <subcellularLocation>
        <location evidence="5">Late endosome</location>
    </subcellularLocation>
    <subcellularLocation>
        <location evidence="6 7">Endosome</location>
        <location evidence="6 7">Multivesicular body</location>
    </subcellularLocation>
</comment>
<comment type="disruption phenotype">
    <text evidence="5 6 7">Seedlings lethality. Severe vacuole biogenesis defects.</text>
</comment>
<comment type="sequence caution" evidence="11">
    <conflict type="erroneous gene model prediction">
        <sequence resource="EMBL-CDS" id="AAD39642"/>
    </conflict>
</comment>
<name>BRO1_ARATH</name>
<proteinExistence type="evidence at protein level"/>
<accession>F4HXZ1</accession>
<accession>Q8H1H8</accession>
<accession>Q9XI56</accession>
<sequence>MASSSLSNLMLAIHEKKTSSVDLYRPLRNYVTFTYSEREAQLIDDDLETLKQLRSDIERVSDPSPAARRDLLISYYKVLCLVETRFPISPDKDHVNAVSFVWYDAFKQKHKATQQNIHLEKAAVLFNLGASYSQIGLGHDRTTVDGRRQASHAFMAAAGAFAHLRDNESIKATIGPSTTVDVSVECVGMLERLMVAQAQECVFENTIAKGSTPGVSAKIARQVGIFYEEALSALIISPLKDHFDKGWISHVQLKAALFYGEACFRYGKELHEKEEIAEEIARLRSGASRLAEAKKSSRGAPAQLIEAMNTLESSINGNLDRAVKENDRVYLMRVPSPSSLSPLPAFSMVKPMNMTDILDASKEKMFSILVPDSSAKALSRYTEMVDDVIRTQAERLQQASELTRVRLKEMDLPDSILAVDGNSALPVDLKEDVEAVQISGGPAGLEAELQQLRDLKRVNQELLVHTEELLQKEATEDSQFRSQFGTRWTRPQSSTLTKNLQDRLNRFAANLKQAGESDVKIERSVRDNSALMSILDRRPIESAVPTLARPIMSLDATEDAIVGTLKQSLRQLENLGAQRAGLEDMLKEMKRKDDILPKLMTITGSYEDMFRKEISKYDHICEDISQNIEVQEQLLMQIQAQNEEFSTIFNLEDYKASKEKCYKQIQAAIMKYREIKENINEGLKFYVTLQDAITNVKQQCSDFVMTRSIQCRDMIEDVQRQMSGLSFQDHRSSGPYPSVHQPTASSPPPPPETQNPSHPHPHAPYYRPPEQMSRPGYSIPPYGPPPPYHTPHGQAPQPYPPQAQQQPHPSWQQGSYYDPQGQQPRPPYPGQSPYQPPHQGGGYYRQ</sequence>
<evidence type="ECO:0000255" key="1"/>
<evidence type="ECO:0000255" key="2">
    <source>
        <dbReference type="PROSITE-ProRule" id="PRU00526"/>
    </source>
</evidence>
<evidence type="ECO:0000256" key="3">
    <source>
        <dbReference type="SAM" id="MobiDB-lite"/>
    </source>
</evidence>
<evidence type="ECO:0000269" key="4">
    <source>
    </source>
</evidence>
<evidence type="ECO:0000269" key="5">
    <source>
    </source>
</evidence>
<evidence type="ECO:0000269" key="6">
    <source>
    </source>
</evidence>
<evidence type="ECO:0000269" key="7">
    <source>
    </source>
</evidence>
<evidence type="ECO:0000303" key="8">
    <source>
    </source>
</evidence>
<evidence type="ECO:0000303" key="9">
    <source>
    </source>
</evidence>
<evidence type="ECO:0000303" key="10">
    <source>
    </source>
</evidence>
<evidence type="ECO:0000305" key="11"/>
<evidence type="ECO:0000305" key="12">
    <source>
    </source>
</evidence>
<evidence type="ECO:0000312" key="13">
    <source>
        <dbReference type="Araport" id="AT1G15130"/>
    </source>
</evidence>
<evidence type="ECO:0000312" key="14">
    <source>
        <dbReference type="EMBL" id="AAD39642.1"/>
    </source>
</evidence>
<gene>
    <name evidence="10" type="primary">BRO1</name>
    <name evidence="8 9" type="synonym">ALIX</name>
    <name evidence="9" type="synonym">SPHR1</name>
    <name evidence="13" type="ordered locus">At1g15130</name>
    <name evidence="14" type="ORF">F9L1.7</name>
</gene>
<keyword id="KW-0175">Coiled coil</keyword>
<keyword id="KW-0963">Cytoplasm</keyword>
<keyword id="KW-0967">Endosome</keyword>
<keyword id="KW-0653">Protein transport</keyword>
<keyword id="KW-1185">Reference proteome</keyword>
<keyword id="KW-0813">Transport</keyword>
<organism>
    <name type="scientific">Arabidopsis thaliana</name>
    <name type="common">Mouse-ear cress</name>
    <dbReference type="NCBI Taxonomy" id="3702"/>
    <lineage>
        <taxon>Eukaryota</taxon>
        <taxon>Viridiplantae</taxon>
        <taxon>Streptophyta</taxon>
        <taxon>Embryophyta</taxon>
        <taxon>Tracheophyta</taxon>
        <taxon>Spermatophyta</taxon>
        <taxon>Magnoliopsida</taxon>
        <taxon>eudicotyledons</taxon>
        <taxon>Gunneridae</taxon>
        <taxon>Pentapetalae</taxon>
        <taxon>rosids</taxon>
        <taxon>malvids</taxon>
        <taxon>Brassicales</taxon>
        <taxon>Brassicaceae</taxon>
        <taxon>Camelineae</taxon>
        <taxon>Arabidopsis</taxon>
    </lineage>
</organism>
<dbReference type="EMBL" id="AC007591">
    <property type="protein sequence ID" value="AAD39642.1"/>
    <property type="status" value="ALT_SEQ"/>
    <property type="molecule type" value="Genomic_DNA"/>
</dbReference>
<dbReference type="EMBL" id="CP002684">
    <property type="protein sequence ID" value="AEE29270.1"/>
    <property type="molecule type" value="Genomic_DNA"/>
</dbReference>
<dbReference type="EMBL" id="AY149441">
    <property type="protein sequence ID" value="AAN12917.1"/>
    <property type="molecule type" value="mRNA"/>
</dbReference>
<dbReference type="EMBL" id="BT005821">
    <property type="protein sequence ID" value="AAO64756.1"/>
    <property type="molecule type" value="mRNA"/>
</dbReference>
<dbReference type="PIR" id="B86285">
    <property type="entry name" value="B86285"/>
</dbReference>
<dbReference type="RefSeq" id="NP_172965.1">
    <property type="nucleotide sequence ID" value="NM_101381.3"/>
</dbReference>
<dbReference type="SMR" id="F4HXZ1"/>
<dbReference type="FunCoup" id="F4HXZ1">
    <property type="interactions" value="4891"/>
</dbReference>
<dbReference type="IntAct" id="F4HXZ1">
    <property type="interactions" value="3"/>
</dbReference>
<dbReference type="STRING" id="3702.F4HXZ1"/>
<dbReference type="TCDB" id="3.A.31.1.2">
    <property type="family name" value="the endosomal sorting complexes required for transport iii (escrt-iii) family"/>
</dbReference>
<dbReference type="iPTMnet" id="F4HXZ1"/>
<dbReference type="PaxDb" id="3702-AT1G15130.1"/>
<dbReference type="ProMEX" id="F4HXZ1"/>
<dbReference type="ProteomicsDB" id="240633"/>
<dbReference type="EnsemblPlants" id="AT1G15130.1">
    <property type="protein sequence ID" value="AT1G15130.1"/>
    <property type="gene ID" value="AT1G15130"/>
</dbReference>
<dbReference type="GeneID" id="838077"/>
<dbReference type="Gramene" id="AT1G15130.1">
    <property type="protein sequence ID" value="AT1G15130.1"/>
    <property type="gene ID" value="AT1G15130"/>
</dbReference>
<dbReference type="KEGG" id="ath:AT1G15130"/>
<dbReference type="Araport" id="AT1G15130"/>
<dbReference type="TAIR" id="AT1G15130">
    <property type="gene designation" value="ALIX"/>
</dbReference>
<dbReference type="eggNOG" id="KOG2220">
    <property type="taxonomic scope" value="Eukaryota"/>
</dbReference>
<dbReference type="HOGENOM" id="CLU_007181_1_0_1"/>
<dbReference type="InParanoid" id="F4HXZ1"/>
<dbReference type="OMA" id="VSHAEEM"/>
<dbReference type="OrthoDB" id="64867at2759"/>
<dbReference type="CD-CODE" id="4299E36E">
    <property type="entry name" value="Nucleolus"/>
</dbReference>
<dbReference type="PRO" id="PR:F4HXZ1"/>
<dbReference type="Proteomes" id="UP000006548">
    <property type="component" value="Chromosome 1"/>
</dbReference>
<dbReference type="ExpressionAtlas" id="F4HXZ1">
    <property type="expression patterns" value="baseline and differential"/>
</dbReference>
<dbReference type="GO" id="GO:0005737">
    <property type="term" value="C:cytoplasm"/>
    <property type="evidence" value="ECO:0000314"/>
    <property type="project" value="UniProtKB"/>
</dbReference>
<dbReference type="GO" id="GO:0005829">
    <property type="term" value="C:cytosol"/>
    <property type="evidence" value="ECO:0000314"/>
    <property type="project" value="TAIR"/>
</dbReference>
<dbReference type="GO" id="GO:0005770">
    <property type="term" value="C:late endosome"/>
    <property type="evidence" value="ECO:0000314"/>
    <property type="project" value="UniProtKB"/>
</dbReference>
<dbReference type="GO" id="GO:0005771">
    <property type="term" value="C:multivesicular body"/>
    <property type="evidence" value="ECO:0000314"/>
    <property type="project" value="UniProtKB"/>
</dbReference>
<dbReference type="GO" id="GO:0009506">
    <property type="term" value="C:plasmodesma"/>
    <property type="evidence" value="ECO:0007005"/>
    <property type="project" value="TAIR"/>
</dbReference>
<dbReference type="GO" id="GO:0043130">
    <property type="term" value="F:ubiquitin binding"/>
    <property type="evidence" value="ECO:0000315"/>
    <property type="project" value="UniProtKB"/>
</dbReference>
<dbReference type="GO" id="GO:0099638">
    <property type="term" value="P:endosome to plasma membrane protein transport"/>
    <property type="evidence" value="ECO:0000315"/>
    <property type="project" value="TAIR"/>
</dbReference>
<dbReference type="GO" id="GO:0036257">
    <property type="term" value="P:multivesicular body organization"/>
    <property type="evidence" value="ECO:0000315"/>
    <property type="project" value="UniProtKB"/>
</dbReference>
<dbReference type="GO" id="GO:0043328">
    <property type="term" value="P:protein transport to vacuole involved in ubiquitin-dependent protein catabolic process via the multivesicular body sorting pathway"/>
    <property type="evidence" value="ECO:0000315"/>
    <property type="project" value="TAIR"/>
</dbReference>
<dbReference type="GO" id="GO:0007033">
    <property type="term" value="P:vacuole organization"/>
    <property type="evidence" value="ECO:0000315"/>
    <property type="project" value="UniProtKB"/>
</dbReference>
<dbReference type="CDD" id="cd09246">
    <property type="entry name" value="BRO1_Alix_like_1"/>
    <property type="match status" value="1"/>
</dbReference>
<dbReference type="CDD" id="cd09238">
    <property type="entry name" value="V_Alix_like_1"/>
    <property type="match status" value="1"/>
</dbReference>
<dbReference type="FunFam" id="1.25.40.280:FF:000001">
    <property type="entry name" value="programmed cell death 6-interacting protein-like isoform X1"/>
    <property type="match status" value="1"/>
</dbReference>
<dbReference type="Gene3D" id="1.20.120.560">
    <property type="entry name" value="alix/aip1 in complex with the ypdl late domain"/>
    <property type="match status" value="1"/>
</dbReference>
<dbReference type="Gene3D" id="1.20.140.50">
    <property type="entry name" value="alix/aip1 like domains"/>
    <property type="match status" value="1"/>
</dbReference>
<dbReference type="Gene3D" id="1.25.40.280">
    <property type="entry name" value="alix/aip1 like domains"/>
    <property type="match status" value="1"/>
</dbReference>
<dbReference type="InterPro" id="IPR025304">
    <property type="entry name" value="ALIX_V_dom"/>
</dbReference>
<dbReference type="InterPro" id="IPR004328">
    <property type="entry name" value="BRO1_dom"/>
</dbReference>
<dbReference type="InterPro" id="IPR038499">
    <property type="entry name" value="BRO1_sf"/>
</dbReference>
<dbReference type="PANTHER" id="PTHR23030">
    <property type="entry name" value="PCD6 INTERACTING PROTEIN-RELATED"/>
    <property type="match status" value="1"/>
</dbReference>
<dbReference type="PANTHER" id="PTHR23030:SF30">
    <property type="entry name" value="TYROSINE-PROTEIN PHOSPHATASE NON-RECEPTOR TYPE 23"/>
    <property type="match status" value="1"/>
</dbReference>
<dbReference type="Pfam" id="PF13949">
    <property type="entry name" value="ALIX_LYPXL_bnd"/>
    <property type="match status" value="1"/>
</dbReference>
<dbReference type="Pfam" id="PF03097">
    <property type="entry name" value="BRO1"/>
    <property type="match status" value="1"/>
</dbReference>
<dbReference type="SMART" id="SM01041">
    <property type="entry name" value="BRO1"/>
    <property type="match status" value="1"/>
</dbReference>
<dbReference type="PROSITE" id="PS51180">
    <property type="entry name" value="BRO1"/>
    <property type="match status" value="1"/>
</dbReference>